<accession>C4KZM7</accession>
<proteinExistence type="inferred from homology"/>
<sequence>MKLHELKPTPGSRHERNRVGRGMATGNGKTSGRGHKGQKARSGGGVRPGFEGGQNPLYRRLPKRGFNNPTRKEYAVVSLDTLNRFEAGTEVTPELLIETGVVSSAKDGIKVLANGKLETKLTVKANKFSGAAKEAIEAAGGTVEVI</sequence>
<keyword id="KW-0687">Ribonucleoprotein</keyword>
<keyword id="KW-0689">Ribosomal protein</keyword>
<keyword id="KW-0694">RNA-binding</keyword>
<keyword id="KW-0699">rRNA-binding</keyword>
<evidence type="ECO:0000255" key="1">
    <source>
        <dbReference type="HAMAP-Rule" id="MF_01341"/>
    </source>
</evidence>
<evidence type="ECO:0000256" key="2">
    <source>
        <dbReference type="SAM" id="MobiDB-lite"/>
    </source>
</evidence>
<evidence type="ECO:0000305" key="3"/>
<gene>
    <name evidence="1" type="primary">rplO</name>
    <name type="ordered locus">EAT1b_1614</name>
</gene>
<name>RL15_EXISA</name>
<comment type="function">
    <text evidence="1">Binds to the 23S rRNA.</text>
</comment>
<comment type="subunit">
    <text evidence="1">Part of the 50S ribosomal subunit.</text>
</comment>
<comment type="similarity">
    <text evidence="1">Belongs to the universal ribosomal protein uL15 family.</text>
</comment>
<organism>
    <name type="scientific">Exiguobacterium sp. (strain ATCC BAA-1283 / AT1b)</name>
    <dbReference type="NCBI Taxonomy" id="360911"/>
    <lineage>
        <taxon>Bacteria</taxon>
        <taxon>Bacillati</taxon>
        <taxon>Bacillota</taxon>
        <taxon>Bacilli</taxon>
        <taxon>Bacillales</taxon>
        <taxon>Bacillales Family XII. Incertae Sedis</taxon>
        <taxon>Exiguobacterium</taxon>
    </lineage>
</organism>
<feature type="chain" id="PRO_1000214705" description="Large ribosomal subunit protein uL15">
    <location>
        <begin position="1"/>
        <end position="146"/>
    </location>
</feature>
<feature type="region of interest" description="Disordered" evidence="2">
    <location>
        <begin position="1"/>
        <end position="69"/>
    </location>
</feature>
<feature type="compositionally biased region" description="Basic and acidic residues" evidence="2">
    <location>
        <begin position="1"/>
        <end position="18"/>
    </location>
</feature>
<feature type="compositionally biased region" description="Gly residues" evidence="2">
    <location>
        <begin position="42"/>
        <end position="52"/>
    </location>
</feature>
<protein>
    <recommendedName>
        <fullName evidence="1">Large ribosomal subunit protein uL15</fullName>
    </recommendedName>
    <alternativeName>
        <fullName evidence="3">50S ribosomal protein L15</fullName>
    </alternativeName>
</protein>
<reference key="1">
    <citation type="journal article" date="2011" name="J. Bacteriol.">
        <title>Complete genome sequence of the Thermophilic Bacterium Exiguobacterium sp. AT1b.</title>
        <authorList>
            <person name="Vishnivetskaya T.A."/>
            <person name="Lucas S."/>
            <person name="Copeland A."/>
            <person name="Lapidus A."/>
            <person name="Glavina del Rio T."/>
            <person name="Dalin E."/>
            <person name="Tice H."/>
            <person name="Bruce D.C."/>
            <person name="Goodwin L.A."/>
            <person name="Pitluck S."/>
            <person name="Saunders E."/>
            <person name="Brettin T."/>
            <person name="Detter C."/>
            <person name="Han C."/>
            <person name="Larimer F."/>
            <person name="Land M.L."/>
            <person name="Hauser L.J."/>
            <person name="Kyrpides N.C."/>
            <person name="Ovchinnikova G."/>
            <person name="Kathariou S."/>
            <person name="Ramaley R.F."/>
            <person name="Rodrigues D.F."/>
            <person name="Hendrix C."/>
            <person name="Richardson P."/>
            <person name="Tiedje J.M."/>
        </authorList>
    </citation>
    <scope>NUCLEOTIDE SEQUENCE [LARGE SCALE GENOMIC DNA]</scope>
    <source>
        <strain>ATCC BAA-1283 / AT1b</strain>
    </source>
</reference>
<dbReference type="EMBL" id="CP001615">
    <property type="protein sequence ID" value="ACQ70540.1"/>
    <property type="molecule type" value="Genomic_DNA"/>
</dbReference>
<dbReference type="RefSeq" id="WP_012727658.1">
    <property type="nucleotide sequence ID" value="NZ_MOEL01000001.1"/>
</dbReference>
<dbReference type="SMR" id="C4KZM7"/>
<dbReference type="STRING" id="360911.EAT1b_1614"/>
<dbReference type="GeneID" id="94370762"/>
<dbReference type="KEGG" id="eat:EAT1b_1614"/>
<dbReference type="eggNOG" id="COG0200">
    <property type="taxonomic scope" value="Bacteria"/>
</dbReference>
<dbReference type="HOGENOM" id="CLU_055188_4_2_9"/>
<dbReference type="OrthoDB" id="9810293at2"/>
<dbReference type="Proteomes" id="UP000000716">
    <property type="component" value="Chromosome"/>
</dbReference>
<dbReference type="GO" id="GO:0022625">
    <property type="term" value="C:cytosolic large ribosomal subunit"/>
    <property type="evidence" value="ECO:0007669"/>
    <property type="project" value="TreeGrafter"/>
</dbReference>
<dbReference type="GO" id="GO:0019843">
    <property type="term" value="F:rRNA binding"/>
    <property type="evidence" value="ECO:0007669"/>
    <property type="project" value="UniProtKB-UniRule"/>
</dbReference>
<dbReference type="GO" id="GO:0003735">
    <property type="term" value="F:structural constituent of ribosome"/>
    <property type="evidence" value="ECO:0007669"/>
    <property type="project" value="InterPro"/>
</dbReference>
<dbReference type="GO" id="GO:0006412">
    <property type="term" value="P:translation"/>
    <property type="evidence" value="ECO:0007669"/>
    <property type="project" value="UniProtKB-UniRule"/>
</dbReference>
<dbReference type="Gene3D" id="3.100.10.10">
    <property type="match status" value="1"/>
</dbReference>
<dbReference type="HAMAP" id="MF_01341">
    <property type="entry name" value="Ribosomal_uL15"/>
    <property type="match status" value="1"/>
</dbReference>
<dbReference type="InterPro" id="IPR030878">
    <property type="entry name" value="Ribosomal_uL15"/>
</dbReference>
<dbReference type="InterPro" id="IPR021131">
    <property type="entry name" value="Ribosomal_uL15/eL18"/>
</dbReference>
<dbReference type="InterPro" id="IPR036227">
    <property type="entry name" value="Ribosomal_uL15/eL18_sf"/>
</dbReference>
<dbReference type="InterPro" id="IPR005749">
    <property type="entry name" value="Ribosomal_uL15_bac-type"/>
</dbReference>
<dbReference type="InterPro" id="IPR001196">
    <property type="entry name" value="Ribosomal_uL15_CS"/>
</dbReference>
<dbReference type="NCBIfam" id="TIGR01071">
    <property type="entry name" value="rplO_bact"/>
    <property type="match status" value="1"/>
</dbReference>
<dbReference type="PANTHER" id="PTHR12934">
    <property type="entry name" value="50S RIBOSOMAL PROTEIN L15"/>
    <property type="match status" value="1"/>
</dbReference>
<dbReference type="PANTHER" id="PTHR12934:SF11">
    <property type="entry name" value="LARGE RIBOSOMAL SUBUNIT PROTEIN UL15M"/>
    <property type="match status" value="1"/>
</dbReference>
<dbReference type="Pfam" id="PF00828">
    <property type="entry name" value="Ribosomal_L27A"/>
    <property type="match status" value="1"/>
</dbReference>
<dbReference type="SUPFAM" id="SSF52080">
    <property type="entry name" value="Ribosomal proteins L15p and L18e"/>
    <property type="match status" value="1"/>
</dbReference>
<dbReference type="PROSITE" id="PS00475">
    <property type="entry name" value="RIBOSOMAL_L15"/>
    <property type="match status" value="1"/>
</dbReference>